<sequence length="126" mass="13739">MAVTKKRKEKKNVYEGNVYIQATFNNTIITVTDLQGNALSWASSGGLGFNGAKKSTPFAAQTVAEAAVQKAQQCGLREVHVFVKGPGIGRESAIRMLGTMGLRVRSIRDITPIPHNGCRPRKTRRI</sequence>
<evidence type="ECO:0000255" key="1">
    <source>
        <dbReference type="HAMAP-Rule" id="MF_01310"/>
    </source>
</evidence>
<evidence type="ECO:0000305" key="2"/>
<keyword id="KW-0687">Ribonucleoprotein</keyword>
<keyword id="KW-0689">Ribosomal protein</keyword>
<keyword id="KW-0694">RNA-binding</keyword>
<keyword id="KW-0699">rRNA-binding</keyword>
<feature type="chain" id="PRO_1000141154" description="Small ribosomal subunit protein uS11">
    <location>
        <begin position="1"/>
        <end position="126"/>
    </location>
</feature>
<reference key="1">
    <citation type="journal article" date="2008" name="BMC Microbiol.">
        <title>Complete genome sequence of Treponema pallidum ssp. pallidum strain SS14 determined with oligonucleotide arrays.</title>
        <authorList>
            <person name="Matejkova P."/>
            <person name="Strouhal M."/>
            <person name="Smajs D."/>
            <person name="Norris S.J."/>
            <person name="Palzkill T."/>
            <person name="Petrosino J.F."/>
            <person name="Sodergren E."/>
            <person name="Norton J.E."/>
            <person name="Singh J."/>
            <person name="Richmond T.A."/>
            <person name="Molla M.N."/>
            <person name="Albert T.J."/>
            <person name="Weinstock G.M."/>
        </authorList>
    </citation>
    <scope>NUCLEOTIDE SEQUENCE [LARGE SCALE GENOMIC DNA]</scope>
    <source>
        <strain>SS14</strain>
    </source>
</reference>
<dbReference type="EMBL" id="CP000805">
    <property type="protein sequence ID" value="ACD70638.1"/>
    <property type="molecule type" value="Genomic_DNA"/>
</dbReference>
<dbReference type="RefSeq" id="WP_010881659.1">
    <property type="nucleotide sequence ID" value="NC_021508.1"/>
</dbReference>
<dbReference type="SMR" id="B2S2F9"/>
<dbReference type="GeneID" id="93875999"/>
<dbReference type="KEGG" id="tpp:TPASS_0211"/>
<dbReference type="PATRIC" id="fig|455434.6.peg.215"/>
<dbReference type="Proteomes" id="UP000001202">
    <property type="component" value="Chromosome"/>
</dbReference>
<dbReference type="GO" id="GO:1990904">
    <property type="term" value="C:ribonucleoprotein complex"/>
    <property type="evidence" value="ECO:0007669"/>
    <property type="project" value="UniProtKB-KW"/>
</dbReference>
<dbReference type="GO" id="GO:0005840">
    <property type="term" value="C:ribosome"/>
    <property type="evidence" value="ECO:0007669"/>
    <property type="project" value="UniProtKB-KW"/>
</dbReference>
<dbReference type="GO" id="GO:0019843">
    <property type="term" value="F:rRNA binding"/>
    <property type="evidence" value="ECO:0007669"/>
    <property type="project" value="UniProtKB-UniRule"/>
</dbReference>
<dbReference type="GO" id="GO:0003735">
    <property type="term" value="F:structural constituent of ribosome"/>
    <property type="evidence" value="ECO:0007669"/>
    <property type="project" value="InterPro"/>
</dbReference>
<dbReference type="GO" id="GO:0006412">
    <property type="term" value="P:translation"/>
    <property type="evidence" value="ECO:0007669"/>
    <property type="project" value="UniProtKB-UniRule"/>
</dbReference>
<dbReference type="FunFam" id="3.30.420.80:FF:000001">
    <property type="entry name" value="30S ribosomal protein S11"/>
    <property type="match status" value="1"/>
</dbReference>
<dbReference type="Gene3D" id="3.30.420.80">
    <property type="entry name" value="Ribosomal protein S11"/>
    <property type="match status" value="1"/>
</dbReference>
<dbReference type="HAMAP" id="MF_01310">
    <property type="entry name" value="Ribosomal_uS11"/>
    <property type="match status" value="1"/>
</dbReference>
<dbReference type="InterPro" id="IPR001971">
    <property type="entry name" value="Ribosomal_uS11"/>
</dbReference>
<dbReference type="InterPro" id="IPR019981">
    <property type="entry name" value="Ribosomal_uS11_bac-type"/>
</dbReference>
<dbReference type="InterPro" id="IPR036967">
    <property type="entry name" value="Ribosomal_uS11_sf"/>
</dbReference>
<dbReference type="NCBIfam" id="NF003698">
    <property type="entry name" value="PRK05309.1"/>
    <property type="match status" value="1"/>
</dbReference>
<dbReference type="NCBIfam" id="TIGR03632">
    <property type="entry name" value="uS11_bact"/>
    <property type="match status" value="1"/>
</dbReference>
<dbReference type="PANTHER" id="PTHR11759">
    <property type="entry name" value="40S RIBOSOMAL PROTEIN S14/30S RIBOSOMAL PROTEIN S11"/>
    <property type="match status" value="1"/>
</dbReference>
<dbReference type="Pfam" id="PF00411">
    <property type="entry name" value="Ribosomal_S11"/>
    <property type="match status" value="1"/>
</dbReference>
<dbReference type="PIRSF" id="PIRSF002131">
    <property type="entry name" value="Ribosomal_S11"/>
    <property type="match status" value="1"/>
</dbReference>
<dbReference type="SUPFAM" id="SSF53137">
    <property type="entry name" value="Translational machinery components"/>
    <property type="match status" value="1"/>
</dbReference>
<gene>
    <name evidence="1" type="primary">rpsK</name>
    <name type="ordered locus">TPASS_0211</name>
</gene>
<comment type="function">
    <text evidence="1">Located on the platform of the 30S subunit, it bridges several disparate RNA helices of the 16S rRNA. Forms part of the Shine-Dalgarno cleft in the 70S ribosome.</text>
</comment>
<comment type="subunit">
    <text evidence="1">Part of the 30S ribosomal subunit. Interacts with proteins S7 and S18. Binds to IF-3.</text>
</comment>
<comment type="similarity">
    <text evidence="1">Belongs to the universal ribosomal protein uS11 family.</text>
</comment>
<name>RS11_TREPS</name>
<protein>
    <recommendedName>
        <fullName evidence="1">Small ribosomal subunit protein uS11</fullName>
    </recommendedName>
    <alternativeName>
        <fullName evidence="2">30S ribosomal protein S11</fullName>
    </alternativeName>
</protein>
<accession>B2S2F9</accession>
<proteinExistence type="inferred from homology"/>
<organism>
    <name type="scientific">Treponema pallidum subsp. pallidum (strain SS14)</name>
    <dbReference type="NCBI Taxonomy" id="455434"/>
    <lineage>
        <taxon>Bacteria</taxon>
        <taxon>Pseudomonadati</taxon>
        <taxon>Spirochaetota</taxon>
        <taxon>Spirochaetia</taxon>
        <taxon>Spirochaetales</taxon>
        <taxon>Treponemataceae</taxon>
        <taxon>Treponema</taxon>
    </lineage>
</organism>